<gene>
    <name evidence="1" type="primary">nei</name>
    <name type="ordered locus">SeSA_A0885</name>
</gene>
<keyword id="KW-0227">DNA damage</keyword>
<keyword id="KW-0234">DNA repair</keyword>
<keyword id="KW-0238">DNA-binding</keyword>
<keyword id="KW-0326">Glycosidase</keyword>
<keyword id="KW-0378">Hydrolase</keyword>
<keyword id="KW-0456">Lyase</keyword>
<keyword id="KW-0479">Metal-binding</keyword>
<keyword id="KW-0511">Multifunctional enzyme</keyword>
<keyword id="KW-0862">Zinc</keyword>
<keyword id="KW-0863">Zinc-finger</keyword>
<accession>B4TQ44</accession>
<protein>
    <recommendedName>
        <fullName evidence="1">Endonuclease 8</fullName>
    </recommendedName>
    <alternativeName>
        <fullName evidence="1">DNA glycosylase/AP lyase Nei</fullName>
        <ecNumber evidence="1">3.2.2.-</ecNumber>
        <ecNumber evidence="1">4.2.99.18</ecNumber>
    </alternativeName>
    <alternativeName>
        <fullName evidence="1">DNA-(apurinic or apyrimidinic site) lyase Nei</fullName>
    </alternativeName>
    <alternativeName>
        <fullName evidence="1">Endonuclease VIII</fullName>
    </alternativeName>
</protein>
<proteinExistence type="inferred from homology"/>
<evidence type="ECO:0000255" key="1">
    <source>
        <dbReference type="HAMAP-Rule" id="MF_01253"/>
    </source>
</evidence>
<organism>
    <name type="scientific">Salmonella schwarzengrund (strain CVM19633)</name>
    <dbReference type="NCBI Taxonomy" id="439843"/>
    <lineage>
        <taxon>Bacteria</taxon>
        <taxon>Pseudomonadati</taxon>
        <taxon>Pseudomonadota</taxon>
        <taxon>Gammaproteobacteria</taxon>
        <taxon>Enterobacterales</taxon>
        <taxon>Enterobacteriaceae</taxon>
        <taxon>Salmonella</taxon>
    </lineage>
</organism>
<feature type="initiator methionine" description="Removed" evidence="1">
    <location>
        <position position="1"/>
    </location>
</feature>
<feature type="chain" id="PRO_1000139946" description="Endonuclease 8">
    <location>
        <begin position="2"/>
        <end position="263"/>
    </location>
</feature>
<feature type="zinc finger region" description="FPG-type" evidence="1">
    <location>
        <begin position="229"/>
        <end position="263"/>
    </location>
</feature>
<feature type="active site" description="Schiff-base intermediate with DNA" evidence="1">
    <location>
        <position position="2"/>
    </location>
</feature>
<feature type="active site" description="Proton donor" evidence="1">
    <location>
        <position position="3"/>
    </location>
</feature>
<feature type="active site" description="Proton donor; for beta-elimination activity" evidence="1">
    <location>
        <position position="53"/>
    </location>
</feature>
<feature type="active site" description="Proton donor; for delta-elimination activity" evidence="1">
    <location>
        <position position="253"/>
    </location>
</feature>
<feature type="binding site" evidence="1">
    <location>
        <position position="70"/>
    </location>
    <ligand>
        <name>DNA</name>
        <dbReference type="ChEBI" id="CHEBI:16991"/>
    </ligand>
</feature>
<feature type="binding site" evidence="1">
    <location>
        <position position="125"/>
    </location>
    <ligand>
        <name>DNA</name>
        <dbReference type="ChEBI" id="CHEBI:16991"/>
    </ligand>
</feature>
<feature type="binding site" evidence="1">
    <location>
        <position position="169"/>
    </location>
    <ligand>
        <name>DNA</name>
        <dbReference type="ChEBI" id="CHEBI:16991"/>
    </ligand>
</feature>
<sequence>MPEGPEIRRAADNLEAAIKGKPLTDVWFAFAQLKPYESQLTGQIVTRIETRGKALLTHFSNGLTLYSHNQLYGVWRVIDTGEIPQTTRILRVRLQTADKTILLYSASDIEMLTADQLTTHPFLQRVGPDVLDARLTPEEVKARLLSPRFRNRQFSGLLLDQAFLAGLGNYLRVEILWQVGLTGQHKAKDLNEAQLNALSHALLDIPRLSYTTRGQADENKHHGALFRFKVFHRDGEACERCGGIIEKTTLSSRPFYWCPHCQK</sequence>
<reference key="1">
    <citation type="journal article" date="2011" name="J. Bacteriol.">
        <title>Comparative genomics of 28 Salmonella enterica isolates: evidence for CRISPR-mediated adaptive sublineage evolution.</title>
        <authorList>
            <person name="Fricke W.F."/>
            <person name="Mammel M.K."/>
            <person name="McDermott P.F."/>
            <person name="Tartera C."/>
            <person name="White D.G."/>
            <person name="Leclerc J.E."/>
            <person name="Ravel J."/>
            <person name="Cebula T.A."/>
        </authorList>
    </citation>
    <scope>NUCLEOTIDE SEQUENCE [LARGE SCALE GENOMIC DNA]</scope>
    <source>
        <strain>CVM19633</strain>
    </source>
</reference>
<comment type="function">
    <text evidence="1">Involved in base excision repair of DNA damaged by oxidation or by mutagenic agents. Acts as a DNA glycosylase that recognizes and removes damaged bases. Has a preference for oxidized pyrimidines, such as thymine glycol, 5,6-dihydrouracil and 5,6-dihydrothymine. Has AP (apurinic/apyrimidinic) lyase activity and introduces nicks in the DNA strand. Cleaves the DNA backbone by beta-delta elimination to generate a single-strand break at the site of the removed base with both 3'- and 5'-phosphates.</text>
</comment>
<comment type="catalytic activity">
    <reaction evidence="1">
        <text>2'-deoxyribonucleotide-(2'-deoxyribose 5'-phosphate)-2'-deoxyribonucleotide-DNA = a 3'-end 2'-deoxyribonucleotide-(2,3-dehydro-2,3-deoxyribose 5'-phosphate)-DNA + a 5'-end 5'-phospho-2'-deoxyribonucleoside-DNA + H(+)</text>
        <dbReference type="Rhea" id="RHEA:66592"/>
        <dbReference type="Rhea" id="RHEA-COMP:13180"/>
        <dbReference type="Rhea" id="RHEA-COMP:16897"/>
        <dbReference type="Rhea" id="RHEA-COMP:17067"/>
        <dbReference type="ChEBI" id="CHEBI:15378"/>
        <dbReference type="ChEBI" id="CHEBI:136412"/>
        <dbReference type="ChEBI" id="CHEBI:157695"/>
        <dbReference type="ChEBI" id="CHEBI:167181"/>
        <dbReference type="EC" id="4.2.99.18"/>
    </reaction>
</comment>
<comment type="cofactor">
    <cofactor evidence="1">
        <name>Zn(2+)</name>
        <dbReference type="ChEBI" id="CHEBI:29105"/>
    </cofactor>
    <text evidence="1">Binds 1 zinc ion per subunit.</text>
</comment>
<comment type="similarity">
    <text evidence="1">Belongs to the FPG family.</text>
</comment>
<dbReference type="EC" id="3.2.2.-" evidence="1"/>
<dbReference type="EC" id="4.2.99.18" evidence="1"/>
<dbReference type="EMBL" id="CP001127">
    <property type="protein sequence ID" value="ACF88956.1"/>
    <property type="molecule type" value="Genomic_DNA"/>
</dbReference>
<dbReference type="RefSeq" id="WP_001113961.1">
    <property type="nucleotide sequence ID" value="NC_011094.1"/>
</dbReference>
<dbReference type="SMR" id="B4TQ44"/>
<dbReference type="KEGG" id="sew:SeSA_A0885"/>
<dbReference type="HOGENOM" id="CLU_038423_2_2_6"/>
<dbReference type="Proteomes" id="UP000001865">
    <property type="component" value="Chromosome"/>
</dbReference>
<dbReference type="GO" id="GO:0140078">
    <property type="term" value="F:class I DNA-(apurinic or apyrimidinic site) endonuclease activity"/>
    <property type="evidence" value="ECO:0007669"/>
    <property type="project" value="UniProtKB-EC"/>
</dbReference>
<dbReference type="GO" id="GO:0003684">
    <property type="term" value="F:damaged DNA binding"/>
    <property type="evidence" value="ECO:0007669"/>
    <property type="project" value="InterPro"/>
</dbReference>
<dbReference type="GO" id="GO:0000703">
    <property type="term" value="F:oxidized pyrimidine nucleobase lesion DNA N-glycosylase activity"/>
    <property type="evidence" value="ECO:0007669"/>
    <property type="project" value="UniProtKB-UniRule"/>
</dbReference>
<dbReference type="GO" id="GO:0008270">
    <property type="term" value="F:zinc ion binding"/>
    <property type="evidence" value="ECO:0007669"/>
    <property type="project" value="UniProtKB-UniRule"/>
</dbReference>
<dbReference type="GO" id="GO:0006284">
    <property type="term" value="P:base-excision repair"/>
    <property type="evidence" value="ECO:0007669"/>
    <property type="project" value="InterPro"/>
</dbReference>
<dbReference type="CDD" id="cd08965">
    <property type="entry name" value="EcNei-like_N"/>
    <property type="match status" value="1"/>
</dbReference>
<dbReference type="FunFam" id="1.10.8.50:FF:000005">
    <property type="entry name" value="Endonuclease 8"/>
    <property type="match status" value="1"/>
</dbReference>
<dbReference type="FunFam" id="3.20.190.10:FF:000002">
    <property type="entry name" value="Endonuclease 8"/>
    <property type="match status" value="1"/>
</dbReference>
<dbReference type="Gene3D" id="1.10.8.50">
    <property type="match status" value="1"/>
</dbReference>
<dbReference type="Gene3D" id="3.20.190.10">
    <property type="entry name" value="MutM-like, N-terminal"/>
    <property type="match status" value="1"/>
</dbReference>
<dbReference type="HAMAP" id="MF_01253">
    <property type="entry name" value="Endonuclease_8"/>
    <property type="match status" value="1"/>
</dbReference>
<dbReference type="InterPro" id="IPR015886">
    <property type="entry name" value="DNA_glyclase/AP_lyase_DNA-bd"/>
</dbReference>
<dbReference type="InterPro" id="IPR015887">
    <property type="entry name" value="DNA_glyclase_Znf_dom_DNA_BS"/>
</dbReference>
<dbReference type="InterPro" id="IPR044091">
    <property type="entry name" value="EcNei-like_N"/>
</dbReference>
<dbReference type="InterPro" id="IPR023713">
    <property type="entry name" value="Endonuclease-VIII"/>
</dbReference>
<dbReference type="InterPro" id="IPR012319">
    <property type="entry name" value="FPG_cat"/>
</dbReference>
<dbReference type="InterPro" id="IPR035937">
    <property type="entry name" value="MutM-like_N-ter"/>
</dbReference>
<dbReference type="InterPro" id="IPR010979">
    <property type="entry name" value="Ribosomal_uS13-like_H2TH"/>
</dbReference>
<dbReference type="InterPro" id="IPR000214">
    <property type="entry name" value="Znf_DNA_glyclase/AP_lyase"/>
</dbReference>
<dbReference type="InterPro" id="IPR010663">
    <property type="entry name" value="Znf_FPG/IleRS"/>
</dbReference>
<dbReference type="NCBIfam" id="NF007763">
    <property type="entry name" value="PRK10445.1"/>
    <property type="match status" value="1"/>
</dbReference>
<dbReference type="PANTHER" id="PTHR42697">
    <property type="entry name" value="ENDONUCLEASE 8"/>
    <property type="match status" value="1"/>
</dbReference>
<dbReference type="PANTHER" id="PTHR42697:SF1">
    <property type="entry name" value="ENDONUCLEASE 8"/>
    <property type="match status" value="1"/>
</dbReference>
<dbReference type="Pfam" id="PF01149">
    <property type="entry name" value="Fapy_DNA_glyco"/>
    <property type="match status" value="1"/>
</dbReference>
<dbReference type="Pfam" id="PF06831">
    <property type="entry name" value="H2TH"/>
    <property type="match status" value="1"/>
</dbReference>
<dbReference type="Pfam" id="PF06827">
    <property type="entry name" value="zf-FPG_IleRS"/>
    <property type="match status" value="1"/>
</dbReference>
<dbReference type="SMART" id="SM00898">
    <property type="entry name" value="Fapy_DNA_glyco"/>
    <property type="match status" value="1"/>
</dbReference>
<dbReference type="SMART" id="SM01232">
    <property type="entry name" value="H2TH"/>
    <property type="match status" value="1"/>
</dbReference>
<dbReference type="SUPFAM" id="SSF57716">
    <property type="entry name" value="Glucocorticoid receptor-like (DNA-binding domain)"/>
    <property type="match status" value="1"/>
</dbReference>
<dbReference type="SUPFAM" id="SSF81624">
    <property type="entry name" value="N-terminal domain of MutM-like DNA repair proteins"/>
    <property type="match status" value="1"/>
</dbReference>
<dbReference type="SUPFAM" id="SSF46946">
    <property type="entry name" value="S13-like H2TH domain"/>
    <property type="match status" value="1"/>
</dbReference>
<dbReference type="PROSITE" id="PS51068">
    <property type="entry name" value="FPG_CAT"/>
    <property type="match status" value="1"/>
</dbReference>
<dbReference type="PROSITE" id="PS01242">
    <property type="entry name" value="ZF_FPG_1"/>
    <property type="match status" value="1"/>
</dbReference>
<dbReference type="PROSITE" id="PS51066">
    <property type="entry name" value="ZF_FPG_2"/>
    <property type="match status" value="1"/>
</dbReference>
<name>END8_SALSV</name>